<evidence type="ECO:0000250" key="1">
    <source>
        <dbReference type="UniProtKB" id="P15436"/>
    </source>
</evidence>
<evidence type="ECO:0000250" key="2">
    <source>
        <dbReference type="UniProtKB" id="P21951"/>
    </source>
</evidence>
<evidence type="ECO:0000250" key="3">
    <source>
        <dbReference type="UniProtKB" id="Q07864"/>
    </source>
</evidence>
<evidence type="ECO:0000256" key="4">
    <source>
        <dbReference type="SAM" id="MobiDB-lite"/>
    </source>
</evidence>
<evidence type="ECO:0000305" key="5"/>
<accession>Q9WVF7</accession>
<accession>E9QKW1</accession>
<accession>Q9QX50</accession>
<gene>
    <name type="primary">Pole</name>
    <name type="synonym">Pole1</name>
</gene>
<organism>
    <name type="scientific">Mus musculus</name>
    <name type="common">Mouse</name>
    <dbReference type="NCBI Taxonomy" id="10090"/>
    <lineage>
        <taxon>Eukaryota</taxon>
        <taxon>Metazoa</taxon>
        <taxon>Chordata</taxon>
        <taxon>Craniata</taxon>
        <taxon>Vertebrata</taxon>
        <taxon>Euteleostomi</taxon>
        <taxon>Mammalia</taxon>
        <taxon>Eutheria</taxon>
        <taxon>Euarchontoglires</taxon>
        <taxon>Glires</taxon>
        <taxon>Rodentia</taxon>
        <taxon>Myomorpha</taxon>
        <taxon>Muroidea</taxon>
        <taxon>Muridae</taxon>
        <taxon>Murinae</taxon>
        <taxon>Mus</taxon>
        <taxon>Mus</taxon>
    </lineage>
</organism>
<dbReference type="EC" id="2.7.7.7" evidence="2"/>
<dbReference type="EC" id="3.1.11.-" evidence="2"/>
<dbReference type="EMBL" id="AF123502">
    <property type="protein sequence ID" value="AAD45244.1"/>
    <property type="molecule type" value="mRNA"/>
</dbReference>
<dbReference type="EMBL" id="AF126398">
    <property type="protein sequence ID" value="AAD46482.1"/>
    <property type="molecule type" value="Genomic_DNA"/>
</dbReference>
<dbReference type="EMBL" id="AF126377">
    <property type="protein sequence ID" value="AAD46482.1"/>
    <property type="status" value="JOINED"/>
    <property type="molecule type" value="Genomic_DNA"/>
</dbReference>
<dbReference type="EMBL" id="AF126378">
    <property type="protein sequence ID" value="AAD46482.1"/>
    <property type="status" value="JOINED"/>
    <property type="molecule type" value="Genomic_DNA"/>
</dbReference>
<dbReference type="EMBL" id="AF126379">
    <property type="protein sequence ID" value="AAD46482.1"/>
    <property type="status" value="JOINED"/>
    <property type="molecule type" value="Genomic_DNA"/>
</dbReference>
<dbReference type="EMBL" id="AF126380">
    <property type="protein sequence ID" value="AAD46482.1"/>
    <property type="status" value="JOINED"/>
    <property type="molecule type" value="Genomic_DNA"/>
</dbReference>
<dbReference type="EMBL" id="AF126381">
    <property type="protein sequence ID" value="AAD46482.1"/>
    <property type="status" value="JOINED"/>
    <property type="molecule type" value="Genomic_DNA"/>
</dbReference>
<dbReference type="EMBL" id="AF126382">
    <property type="protein sequence ID" value="AAD46482.1"/>
    <property type="status" value="JOINED"/>
    <property type="molecule type" value="Genomic_DNA"/>
</dbReference>
<dbReference type="EMBL" id="AF126383">
    <property type="protein sequence ID" value="AAD46482.1"/>
    <property type="status" value="JOINED"/>
    <property type="molecule type" value="Genomic_DNA"/>
</dbReference>
<dbReference type="EMBL" id="AF126384">
    <property type="protein sequence ID" value="AAD46482.1"/>
    <property type="status" value="JOINED"/>
    <property type="molecule type" value="Genomic_DNA"/>
</dbReference>
<dbReference type="EMBL" id="AF126385">
    <property type="protein sequence ID" value="AAD46482.1"/>
    <property type="status" value="JOINED"/>
    <property type="molecule type" value="Genomic_DNA"/>
</dbReference>
<dbReference type="EMBL" id="AF126386">
    <property type="protein sequence ID" value="AAD46482.1"/>
    <property type="status" value="JOINED"/>
    <property type="molecule type" value="Genomic_DNA"/>
</dbReference>
<dbReference type="EMBL" id="AF126387">
    <property type="protein sequence ID" value="AAD46482.1"/>
    <property type="status" value="JOINED"/>
    <property type="molecule type" value="Genomic_DNA"/>
</dbReference>
<dbReference type="EMBL" id="AF126388">
    <property type="protein sequence ID" value="AAD46482.1"/>
    <property type="status" value="JOINED"/>
    <property type="molecule type" value="Genomic_DNA"/>
</dbReference>
<dbReference type="EMBL" id="AF126389">
    <property type="protein sequence ID" value="AAD46482.1"/>
    <property type="status" value="JOINED"/>
    <property type="molecule type" value="Genomic_DNA"/>
</dbReference>
<dbReference type="EMBL" id="AF126390">
    <property type="protein sequence ID" value="AAD46482.1"/>
    <property type="status" value="JOINED"/>
    <property type="molecule type" value="Genomic_DNA"/>
</dbReference>
<dbReference type="EMBL" id="AF126391">
    <property type="protein sequence ID" value="AAD46482.1"/>
    <property type="status" value="JOINED"/>
    <property type="molecule type" value="Genomic_DNA"/>
</dbReference>
<dbReference type="EMBL" id="AF126392">
    <property type="protein sequence ID" value="AAD46482.1"/>
    <property type="status" value="JOINED"/>
    <property type="molecule type" value="Genomic_DNA"/>
</dbReference>
<dbReference type="EMBL" id="AF126393">
    <property type="protein sequence ID" value="AAD46482.1"/>
    <property type="status" value="JOINED"/>
    <property type="molecule type" value="Genomic_DNA"/>
</dbReference>
<dbReference type="EMBL" id="AF126394">
    <property type="protein sequence ID" value="AAD46482.1"/>
    <property type="status" value="JOINED"/>
    <property type="molecule type" value="Genomic_DNA"/>
</dbReference>
<dbReference type="EMBL" id="AF126395">
    <property type="protein sequence ID" value="AAD46482.1"/>
    <property type="status" value="JOINED"/>
    <property type="molecule type" value="Genomic_DNA"/>
</dbReference>
<dbReference type="EMBL" id="AF126396">
    <property type="protein sequence ID" value="AAD46482.1"/>
    <property type="status" value="JOINED"/>
    <property type="molecule type" value="Genomic_DNA"/>
</dbReference>
<dbReference type="EMBL" id="AF126397">
    <property type="protein sequence ID" value="AAD46482.1"/>
    <property type="status" value="JOINED"/>
    <property type="molecule type" value="Genomic_DNA"/>
</dbReference>
<dbReference type="EMBL" id="AC118260">
    <property type="status" value="NOT_ANNOTATED_CDS"/>
    <property type="molecule type" value="Genomic_DNA"/>
</dbReference>
<dbReference type="EMBL" id="AC123699">
    <property type="status" value="NOT_ANNOTATED_CDS"/>
    <property type="molecule type" value="Genomic_DNA"/>
</dbReference>
<dbReference type="CCDS" id="CCDS19525.1"/>
<dbReference type="RefSeq" id="NP_035262.2">
    <property type="nucleotide sequence ID" value="NM_011132.2"/>
</dbReference>
<dbReference type="SMR" id="Q9WVF7"/>
<dbReference type="BioGRID" id="202292">
    <property type="interactions" value="11"/>
</dbReference>
<dbReference type="ComplexPortal" id="CPX-2109">
    <property type="entry name" value="DNA polymerase epsilon complex"/>
</dbReference>
<dbReference type="FunCoup" id="Q9WVF7">
    <property type="interactions" value="2251"/>
</dbReference>
<dbReference type="STRING" id="10090.ENSMUSP00000007296"/>
<dbReference type="GlyGen" id="Q9WVF7">
    <property type="glycosylation" value="1 site"/>
</dbReference>
<dbReference type="iPTMnet" id="Q9WVF7"/>
<dbReference type="PhosphoSitePlus" id="Q9WVF7"/>
<dbReference type="PaxDb" id="10090-ENSMUSP00000007296"/>
<dbReference type="ProteomicsDB" id="279567"/>
<dbReference type="Pumba" id="Q9WVF7"/>
<dbReference type="Antibodypedia" id="32096">
    <property type="antibodies" value="184 antibodies from 23 providers"/>
</dbReference>
<dbReference type="DNASU" id="18973"/>
<dbReference type="Ensembl" id="ENSMUST00000007296.12">
    <property type="protein sequence ID" value="ENSMUSP00000007296.6"/>
    <property type="gene ID" value="ENSMUSG00000007080.15"/>
</dbReference>
<dbReference type="GeneID" id="18973"/>
<dbReference type="KEGG" id="mmu:18973"/>
<dbReference type="UCSC" id="uc008yqm.2">
    <property type="organism name" value="mouse"/>
</dbReference>
<dbReference type="AGR" id="MGI:1196391"/>
<dbReference type="CTD" id="5426"/>
<dbReference type="MGI" id="MGI:1196391">
    <property type="gene designation" value="Pole"/>
</dbReference>
<dbReference type="VEuPathDB" id="HostDB:ENSMUSG00000007080"/>
<dbReference type="eggNOG" id="KOG1798">
    <property type="taxonomic scope" value="Eukaryota"/>
</dbReference>
<dbReference type="GeneTree" id="ENSGT00390000010194"/>
<dbReference type="HOGENOM" id="CLU_000556_0_0_1"/>
<dbReference type="InParanoid" id="Q9WVF7"/>
<dbReference type="OMA" id="MLDQCRY"/>
<dbReference type="OrthoDB" id="10060449at2759"/>
<dbReference type="PhylomeDB" id="Q9WVF7"/>
<dbReference type="TreeFam" id="TF105017"/>
<dbReference type="Reactome" id="R-MMU-110314">
    <property type="pathway name" value="Recognition of DNA damage by PCNA-containing replication complex"/>
</dbReference>
<dbReference type="Reactome" id="R-MMU-5651801">
    <property type="pathway name" value="PCNA-Dependent Long Patch Base Excision Repair"/>
</dbReference>
<dbReference type="Reactome" id="R-MMU-5656169">
    <property type="pathway name" value="Termination of translesion DNA synthesis"/>
</dbReference>
<dbReference type="Reactome" id="R-MMU-5685942">
    <property type="pathway name" value="HDR through Homologous Recombination (HRR)"/>
</dbReference>
<dbReference type="Reactome" id="R-MMU-5696397">
    <property type="pathway name" value="Gap-filling DNA repair synthesis and ligation in GG-NER"/>
</dbReference>
<dbReference type="Reactome" id="R-MMU-5696400">
    <property type="pathway name" value="Dual Incision in GG-NER"/>
</dbReference>
<dbReference type="Reactome" id="R-MMU-6782135">
    <property type="pathway name" value="Dual incision in TC-NER"/>
</dbReference>
<dbReference type="Reactome" id="R-MMU-6782210">
    <property type="pathway name" value="Gap-filling DNA repair synthesis and ligation in TC-NER"/>
</dbReference>
<dbReference type="Reactome" id="R-MMU-68952">
    <property type="pathway name" value="DNA replication initiation"/>
</dbReference>
<dbReference type="Reactome" id="R-MMU-68962">
    <property type="pathway name" value="Activation of the pre-replicative complex"/>
</dbReference>
<dbReference type="BioGRID-ORCS" id="18973">
    <property type="hits" value="29 hits in 111 CRISPR screens"/>
</dbReference>
<dbReference type="ChiTaRS" id="Pole">
    <property type="organism name" value="mouse"/>
</dbReference>
<dbReference type="PRO" id="PR:Q9WVF7"/>
<dbReference type="Proteomes" id="UP000000589">
    <property type="component" value="Chromosome 5"/>
</dbReference>
<dbReference type="RNAct" id="Q9WVF7">
    <property type="molecule type" value="protein"/>
</dbReference>
<dbReference type="Bgee" id="ENSMUSG00000007080">
    <property type="expression patterns" value="Expressed in ear vesicle and 162 other cell types or tissues"/>
</dbReference>
<dbReference type="ExpressionAtlas" id="Q9WVF7">
    <property type="expression patterns" value="baseline and differential"/>
</dbReference>
<dbReference type="GO" id="GO:0008622">
    <property type="term" value="C:epsilon DNA polymerase complex"/>
    <property type="evidence" value="ECO:0000250"/>
    <property type="project" value="UniProtKB"/>
</dbReference>
<dbReference type="GO" id="GO:0005654">
    <property type="term" value="C:nucleoplasm"/>
    <property type="evidence" value="ECO:0007669"/>
    <property type="project" value="Ensembl"/>
</dbReference>
<dbReference type="GO" id="GO:0005886">
    <property type="term" value="C:plasma membrane"/>
    <property type="evidence" value="ECO:0007669"/>
    <property type="project" value="Ensembl"/>
</dbReference>
<dbReference type="GO" id="GO:0051539">
    <property type="term" value="F:4 iron, 4 sulfur cluster binding"/>
    <property type="evidence" value="ECO:0007669"/>
    <property type="project" value="UniProtKB-KW"/>
</dbReference>
<dbReference type="GO" id="GO:0003682">
    <property type="term" value="F:chromatin binding"/>
    <property type="evidence" value="ECO:0007669"/>
    <property type="project" value="Ensembl"/>
</dbReference>
<dbReference type="GO" id="GO:0003677">
    <property type="term" value="F:DNA binding"/>
    <property type="evidence" value="ECO:0007669"/>
    <property type="project" value="UniProtKB-KW"/>
</dbReference>
<dbReference type="GO" id="GO:0003887">
    <property type="term" value="F:DNA-directed DNA polymerase activity"/>
    <property type="evidence" value="ECO:0007669"/>
    <property type="project" value="UniProtKB-KW"/>
</dbReference>
<dbReference type="GO" id="GO:0016787">
    <property type="term" value="F:hydrolase activity"/>
    <property type="evidence" value="ECO:0007669"/>
    <property type="project" value="UniProtKB-KW"/>
</dbReference>
<dbReference type="GO" id="GO:0000166">
    <property type="term" value="F:nucleotide binding"/>
    <property type="evidence" value="ECO:0007669"/>
    <property type="project" value="InterPro"/>
</dbReference>
<dbReference type="GO" id="GO:0008270">
    <property type="term" value="F:zinc ion binding"/>
    <property type="evidence" value="ECO:0007669"/>
    <property type="project" value="UniProtKB-KW"/>
</dbReference>
<dbReference type="GO" id="GO:0006287">
    <property type="term" value="P:base-excision repair, gap-filling"/>
    <property type="evidence" value="ECO:0007669"/>
    <property type="project" value="Ensembl"/>
</dbReference>
<dbReference type="GO" id="GO:0000731">
    <property type="term" value="P:DNA synthesis involved in DNA repair"/>
    <property type="evidence" value="ECO:0007669"/>
    <property type="project" value="Ensembl"/>
</dbReference>
<dbReference type="GO" id="GO:0006261">
    <property type="term" value="P:DNA-templated DNA replication"/>
    <property type="evidence" value="ECO:0000266"/>
    <property type="project" value="ComplexPortal"/>
</dbReference>
<dbReference type="GO" id="GO:0048568">
    <property type="term" value="P:embryonic organ development"/>
    <property type="evidence" value="ECO:0007669"/>
    <property type="project" value="Ensembl"/>
</dbReference>
<dbReference type="GO" id="GO:0000082">
    <property type="term" value="P:G1/S transition of mitotic cell cycle"/>
    <property type="evidence" value="ECO:0007669"/>
    <property type="project" value="Ensembl"/>
</dbReference>
<dbReference type="GO" id="GO:0006297">
    <property type="term" value="P:nucleotide-excision repair, DNA gap filling"/>
    <property type="evidence" value="ECO:0007669"/>
    <property type="project" value="Ensembl"/>
</dbReference>
<dbReference type="CDD" id="cd05779">
    <property type="entry name" value="DNA_polB_epsilon_exo"/>
    <property type="match status" value="1"/>
</dbReference>
<dbReference type="CDD" id="cd05535">
    <property type="entry name" value="POLBc_epsilon"/>
    <property type="match status" value="1"/>
</dbReference>
<dbReference type="FunFam" id="1.10.132.60:FF:000002">
    <property type="entry name" value="DNA polymerase epsilon catalytic subunit"/>
    <property type="match status" value="1"/>
</dbReference>
<dbReference type="FunFam" id="3.30.420.10:FF:000010">
    <property type="entry name" value="DNA polymerase epsilon catalytic subunit"/>
    <property type="match status" value="1"/>
</dbReference>
<dbReference type="FunFam" id="3.90.1600.10:FF:000006">
    <property type="entry name" value="DNA polymerase epsilon catalytic subunit"/>
    <property type="match status" value="1"/>
</dbReference>
<dbReference type="Gene3D" id="1.10.132.60">
    <property type="entry name" value="DNA polymerase family B, C-terminal domain"/>
    <property type="match status" value="1"/>
</dbReference>
<dbReference type="Gene3D" id="3.30.342.10">
    <property type="entry name" value="DNA Polymerase, chain B, domain 1"/>
    <property type="match status" value="1"/>
</dbReference>
<dbReference type="Gene3D" id="3.90.1600.10">
    <property type="entry name" value="Palm domain of DNA polymerase"/>
    <property type="match status" value="1"/>
</dbReference>
<dbReference type="Gene3D" id="3.30.420.10">
    <property type="entry name" value="Ribonuclease H-like superfamily/Ribonuclease H"/>
    <property type="match status" value="1"/>
</dbReference>
<dbReference type="InterPro" id="IPR006172">
    <property type="entry name" value="DNA-dir_DNA_pol_B"/>
</dbReference>
<dbReference type="InterPro" id="IPR006133">
    <property type="entry name" value="DNA-dir_DNA_pol_B_exonuc"/>
</dbReference>
<dbReference type="InterPro" id="IPR043502">
    <property type="entry name" value="DNA/RNA_pol_sf"/>
</dbReference>
<dbReference type="InterPro" id="IPR042087">
    <property type="entry name" value="DNA_pol_B_thumb"/>
</dbReference>
<dbReference type="InterPro" id="IPR013697">
    <property type="entry name" value="DNA_pol_e_suA_C"/>
</dbReference>
<dbReference type="InterPro" id="IPR023211">
    <property type="entry name" value="DNA_pol_palm_dom_sf"/>
</dbReference>
<dbReference type="InterPro" id="IPR029703">
    <property type="entry name" value="POL2"/>
</dbReference>
<dbReference type="InterPro" id="IPR055191">
    <property type="entry name" value="POL2_thumb"/>
</dbReference>
<dbReference type="InterPro" id="IPR012337">
    <property type="entry name" value="RNaseH-like_sf"/>
</dbReference>
<dbReference type="InterPro" id="IPR036397">
    <property type="entry name" value="RNaseH_sf"/>
</dbReference>
<dbReference type="InterPro" id="IPR054475">
    <property type="entry name" value="Znf-DPOE"/>
</dbReference>
<dbReference type="PANTHER" id="PTHR10670">
    <property type="entry name" value="DNA POLYMERASE EPSILON CATALYTIC SUBUNIT A"/>
    <property type="match status" value="1"/>
</dbReference>
<dbReference type="PANTHER" id="PTHR10670:SF0">
    <property type="entry name" value="DNA POLYMERASE EPSILON CATALYTIC SUBUNIT A"/>
    <property type="match status" value="1"/>
</dbReference>
<dbReference type="Pfam" id="PF03104">
    <property type="entry name" value="DNA_pol_B_exo1"/>
    <property type="match status" value="1"/>
</dbReference>
<dbReference type="Pfam" id="PF08490">
    <property type="entry name" value="DUF1744"/>
    <property type="match status" value="1"/>
</dbReference>
<dbReference type="Pfam" id="PF22634">
    <property type="entry name" value="POL2_thumb"/>
    <property type="match status" value="1"/>
</dbReference>
<dbReference type="Pfam" id="PF22912">
    <property type="entry name" value="zf-DPOE"/>
    <property type="match status" value="1"/>
</dbReference>
<dbReference type="Pfam" id="PF23250">
    <property type="entry name" value="zf_DPOE_2"/>
    <property type="match status" value="1"/>
</dbReference>
<dbReference type="SMART" id="SM01159">
    <property type="entry name" value="DUF1744"/>
    <property type="match status" value="1"/>
</dbReference>
<dbReference type="SMART" id="SM00486">
    <property type="entry name" value="POLBc"/>
    <property type="match status" value="1"/>
</dbReference>
<dbReference type="SUPFAM" id="SSF56672">
    <property type="entry name" value="DNA/RNA polymerases"/>
    <property type="match status" value="1"/>
</dbReference>
<dbReference type="SUPFAM" id="SSF53098">
    <property type="entry name" value="Ribonuclease H-like"/>
    <property type="match status" value="1"/>
</dbReference>
<name>DPOE1_MOUSE</name>
<proteinExistence type="evidence at protein level"/>
<reference key="1">
    <citation type="journal article" date="1999" name="Biochim. Biophys. Acta">
        <title>cDNA and structural organization of the gene Pole1 for the mouse DNA polymerase epsilon catalytic subunit.</title>
        <authorList>
            <person name="Huang D."/>
            <person name="Knuuti R."/>
            <person name="Palosaari H."/>
            <person name="Pospiech H."/>
            <person name="Syvaoja J.E."/>
        </authorList>
    </citation>
    <scope>NUCLEOTIDE SEQUENCE [GENOMIC DNA / MRNA]</scope>
</reference>
<reference key="2">
    <citation type="journal article" date="2009" name="PLoS Biol.">
        <title>Lineage-specific biology revealed by a finished genome assembly of the mouse.</title>
        <authorList>
            <person name="Church D.M."/>
            <person name="Goodstadt L."/>
            <person name="Hillier L.W."/>
            <person name="Zody M.C."/>
            <person name="Goldstein S."/>
            <person name="She X."/>
            <person name="Bult C.J."/>
            <person name="Agarwala R."/>
            <person name="Cherry J.L."/>
            <person name="DiCuccio M."/>
            <person name="Hlavina W."/>
            <person name="Kapustin Y."/>
            <person name="Meric P."/>
            <person name="Maglott D."/>
            <person name="Birtle Z."/>
            <person name="Marques A.C."/>
            <person name="Graves T."/>
            <person name="Zhou S."/>
            <person name="Teague B."/>
            <person name="Potamousis K."/>
            <person name="Churas C."/>
            <person name="Place M."/>
            <person name="Herschleb J."/>
            <person name="Runnheim R."/>
            <person name="Forrest D."/>
            <person name="Amos-Landgraf J."/>
            <person name="Schwartz D.C."/>
            <person name="Cheng Z."/>
            <person name="Lindblad-Toh K."/>
            <person name="Eichler E.E."/>
            <person name="Ponting C.P."/>
        </authorList>
    </citation>
    <scope>NUCLEOTIDE SEQUENCE [LARGE SCALE GENOMIC DNA]</scope>
    <source>
        <strain>C57BL/6J</strain>
    </source>
</reference>
<reference key="3">
    <citation type="journal article" date="2010" name="Cell">
        <title>A tissue-specific atlas of mouse protein phosphorylation and expression.</title>
        <authorList>
            <person name="Huttlin E.L."/>
            <person name="Jedrychowski M.P."/>
            <person name="Elias J.E."/>
            <person name="Goswami T."/>
            <person name="Rad R."/>
            <person name="Beausoleil S.A."/>
            <person name="Villen J."/>
            <person name="Haas W."/>
            <person name="Sowa M.E."/>
            <person name="Gygi S.P."/>
        </authorList>
    </citation>
    <scope>IDENTIFICATION BY MASS SPECTROMETRY [LARGE SCALE ANALYSIS]</scope>
    <source>
        <tissue>Spleen</tissue>
        <tissue>Testis</tissue>
    </source>
</reference>
<feature type="chain" id="PRO_0000046456" description="DNA polymerase epsilon catalytic subunit A">
    <location>
        <begin position="1"/>
        <end position="2283"/>
    </location>
</feature>
<feature type="zinc finger region" description="CysA-type" evidence="1">
    <location>
        <begin position="2155"/>
        <end position="2187"/>
    </location>
</feature>
<feature type="region of interest" description="Disordered" evidence="4">
    <location>
        <begin position="1"/>
        <end position="32"/>
    </location>
</feature>
<feature type="region of interest" description="Disordered" evidence="4">
    <location>
        <begin position="1935"/>
        <end position="1968"/>
    </location>
</feature>
<feature type="region of interest" description="Disordered" evidence="4">
    <location>
        <begin position="2014"/>
        <end position="2041"/>
    </location>
</feature>
<feature type="short sequence motif" description="CysB motif" evidence="1">
    <location>
        <begin position="2218"/>
        <end position="2235"/>
    </location>
</feature>
<feature type="compositionally biased region" description="Basic and acidic residues" evidence="4">
    <location>
        <begin position="9"/>
        <end position="24"/>
    </location>
</feature>
<feature type="compositionally biased region" description="Basic and acidic residues" evidence="4">
    <location>
        <begin position="1936"/>
        <end position="1946"/>
    </location>
</feature>
<feature type="compositionally biased region" description="Acidic residues" evidence="4">
    <location>
        <begin position="1947"/>
        <end position="1968"/>
    </location>
</feature>
<feature type="compositionally biased region" description="Polar residues" evidence="4">
    <location>
        <begin position="2028"/>
        <end position="2037"/>
    </location>
</feature>
<feature type="binding site" evidence="1">
    <location>
        <position position="2155"/>
    </location>
    <ligand>
        <name>Zn(2+)</name>
        <dbReference type="ChEBI" id="CHEBI:29105"/>
    </ligand>
</feature>
<feature type="binding site" evidence="1">
    <location>
        <position position="2158"/>
    </location>
    <ligand>
        <name>Zn(2+)</name>
        <dbReference type="ChEBI" id="CHEBI:29105"/>
    </ligand>
</feature>
<feature type="binding site" evidence="1">
    <location>
        <position position="2184"/>
    </location>
    <ligand>
        <name>Zn(2+)</name>
        <dbReference type="ChEBI" id="CHEBI:29105"/>
    </ligand>
</feature>
<feature type="binding site" evidence="1">
    <location>
        <position position="2187"/>
    </location>
    <ligand>
        <name>Zn(2+)</name>
        <dbReference type="ChEBI" id="CHEBI:29105"/>
    </ligand>
</feature>
<feature type="binding site" evidence="1">
    <location>
        <position position="2218"/>
    </location>
    <ligand>
        <name>[4Fe-4S] cluster</name>
        <dbReference type="ChEBI" id="CHEBI:49883"/>
    </ligand>
</feature>
<feature type="binding site" evidence="1">
    <location>
        <position position="2221"/>
    </location>
    <ligand>
        <name>[4Fe-4S] cluster</name>
        <dbReference type="ChEBI" id="CHEBI:49883"/>
    </ligand>
</feature>
<feature type="binding site" evidence="1">
    <location>
        <position position="2233"/>
    </location>
    <ligand>
        <name>[4Fe-4S] cluster</name>
        <dbReference type="ChEBI" id="CHEBI:49883"/>
    </ligand>
</feature>
<feature type="binding site" evidence="1">
    <location>
        <position position="2235"/>
    </location>
    <ligand>
        <name>[4Fe-4S] cluster</name>
        <dbReference type="ChEBI" id="CHEBI:49883"/>
    </ligand>
</feature>
<feature type="modified residue" description="Phosphoserine" evidence="3">
    <location>
        <position position="1184"/>
    </location>
</feature>
<feature type="modified residue" description="Phosphoserine" evidence="3">
    <location>
        <position position="1296"/>
    </location>
</feature>
<feature type="modified residue" description="Phosphoserine" evidence="3">
    <location>
        <position position="1316"/>
    </location>
</feature>
<feature type="sequence conflict" description="In Ref. 1; AAD46482." evidence="5" ref="1">
    <original>K</original>
    <variation>T</variation>
    <location>
        <position position="284"/>
    </location>
</feature>
<feature type="sequence conflict" description="In Ref. 1; AAD46482/AAD45244." evidence="5" ref="1">
    <original>M</original>
    <variation>V</variation>
    <location>
        <position position="533"/>
    </location>
</feature>
<feature type="sequence conflict" description="In Ref. 1; AAD45244." evidence="5" ref="1">
    <original>G</original>
    <variation>E</variation>
    <location>
        <position position="1309"/>
    </location>
</feature>
<feature type="sequence conflict" description="In Ref. 1; AAD46482." evidence="5" ref="1">
    <original>R</original>
    <variation>K</variation>
    <location>
        <position position="1320"/>
    </location>
</feature>
<feature type="sequence conflict" description="In Ref. 1; AAD45244." evidence="5" ref="1">
    <original>ALP</original>
    <variation>GLFL</variation>
    <location>
        <begin position="1386"/>
        <end position="1388"/>
    </location>
</feature>
<feature type="sequence conflict" description="In Ref. 1; AAD46482/AAD45244." evidence="5" ref="1">
    <original>K</original>
    <variation>E</variation>
    <location>
        <position position="1561"/>
    </location>
</feature>
<feature type="sequence conflict" description="In Ref. 1; AAD45244." evidence="5" ref="1">
    <original>T</original>
    <variation>I</variation>
    <location>
        <position position="1665"/>
    </location>
</feature>
<feature type="sequence conflict" description="In Ref. 1; AAD46482." evidence="5" ref="1">
    <original>V</original>
    <variation>I</variation>
    <location>
        <position position="2086"/>
    </location>
</feature>
<feature type="sequence conflict" description="In Ref. 1; AAD45244." evidence="5" ref="1">
    <original>L</original>
    <variation>Q</variation>
    <location>
        <position position="2111"/>
    </location>
</feature>
<sequence length="2283" mass="262100">MVLRNSGRRHPEPGADGEGSRDDGPSSSVSALKRLERSQWTDKMDLRFGFERLKEPGERTGWLINMHPTEILDEDKRLVSAVDYYFIQDDGSRFKVALPYMPYFYIAARKGCDREVSSFLSKKFQGKIAKLENVPKEDLDLPNHLVGLKRSYIKLSFHTVEDLVKVRKEISPAVKKNREQDHASDEYTTMLSSILQGGSVITDEDETSKKIADQLDNIVDMREYDVPYHIRLSIDLRIHVAHWYNVRFRGNAFPVEITRRDDLVERPDPVVLAFDIETTKLPLKFPDAETDQIMMISYMIDGQGYLITNREIVSEDIEDFEFTPKPEYEGPFCVFNEPDEVHLIQRWFEHIQETKPTIMVTYNGDFFDWPFVEARAAIHGLSMYQEIGFQKDSQGEYKAPQCIHMDCLRWVKRDSYLPVGSHNLKAAAKAKLGYDPVELDPEDMCRMATEQPQTLATYSVSDAVATYYLYMKYVHPFIFALCTIIPMEPDEVLRKGSGTLCEALLMVQAFHANIIFPNKQEQEFNKLTDDGHMLDAETYVGGHVEALESGVFRSDIPCRFRMNPAAFDFLLQRVEKTMRHAIEEEEKVPVEQATNFQEVCEQIKTKLTSLKDVPNRIECPLIYHLDVGAMYPNIILTNRLQPSAIVDEATCAACDFNKPGASCQRKMAWQWRGEFMPASRSEYHRIQHQLESEKFPPLFPEGPARAFHELSREEQAKYEKRRLADYCRKAYKKIHVTKVEERLTTICQRENSFYVDTVRAFRDRRYEFKGLHKVWKKKLSAAVEVGDASEVKRCKNMEILYDSLQLAHKCILNSFYGYVMRKGARWYSMEMAGIVCFTGANIITQARELIEQIGRPLELDTDGIWCVLPNSFPENFVIKTTNAKKPKLTISYPGAMLNIMVKEGFTNHQYQELTEPSSLTYVTHSENSIFFEVDGPYLAMILPASKEEGKKLKKRYAVFNEDGSLAELKGFEVKRRGELQLIKIFQSSVFEAFLKGSTLEEVYGSVAKVADYWLDVLYSKAANMPDSELFELISENRSMSRKLEDYGEQKSTSISTAKRLAEFLGDQMVKDAGLSCRYIISRKPEGSPVTERAIPLAIFQAEPTVRKHFLRKWLKSSSLQDFDIRTILDWDYYIERLGSAIQKIITIPAALQQVKNPVPRVKHPDWLHKKLLEKNDIYKQKKISELFVLEGKRQIVMAQASENSLSLCTPDMEDIGLTKPHHSTVPVATKRKRVWETQKESQDIALTVPWQEVLGQPPSLGTTQEEWLVWLQFHKKKWQLQAQQRLALRKKQRLESAEDMPRLGPIREGPSTGLGSFLRRTARSIMDLPWQIIQISETRQAGLFRLWAIIGNDLHCIKLSIPRVFYVNQRVAKAEDGPAYRKVNRALPRSNIVYNLYEYSVPEDMYQEHINEINTELSVPDIEGVYETQVPLLFRALVQLGCVCVVNKQLTRHLSGWEAETFALEHLEMRSLAQFSYLEPGSIRHIYLYHHTQGHKALFGVFIPSQRRASVFVLDTVRSNQMPGLSALYSSEHSLLLDKVDPKLLPPPKHTFEVRAETNLKTICRAIQRFLLAYKEERRGPTLIAVQSSWELCRLTSEIPVLEEFPLVPIRVADKISYAVLDWQRHGARRMIRHYLNLDLCLSQAFEMSRYFHIPVGNLPEDISTFGSDLFFARHLQHHNHLLWLSPTSRPDLGGKEADDNRLVMEFDDRATVEINSSGCYSTVCVELDIQNLAVNTILQSHHVNDMEGAGSMGISFDVIQQASLEDMVTGNQAASALANYDETALCSSTFRILKSMVVGWVKEITQYHNIYADNQVMHFYRWLQSPCSLLHDPALHRTLHNMMKKLFLQLIAEFKRLGSSVVYANFNRIILCTKKRRIEDALAYVEYITNSIHSKEIFHSLTISFSRCWEFLLWMDPSNYGGIKGKVPSSIHCGQVKEQDSQAREETDEEEEDKEKDEEEEGMGESEVEDLLENNWNILQFLPQAASCQSYFLMIVSAYIVAVYQSMKEELRHSAPGSTPVKRKGASQFSQESEGATGSLPGMITFSQDYVANELTQSFFTITQKIQKKVTGSRNTTEPSEMFPVLPGSHLLLNNPALEFIKYVCKVLSLDTNITNQVNKLNRDLLRLVDVGEFSEEAQFRDPCHSYVLPEVICHSCNFCRDLDLCKDSSFSQDGAILPQWLCSNCQAPYDSSAIESALVEALQRKLMAFTLQDLVCLKCRGMKETHMPVYCSCAGDFTLTIRTEVFMEQIRIFQNIAKYYSMSYLQETIEWLLQTSPVSNC</sequence>
<comment type="function">
    <text evidence="2 3">Catalytic component of the DNA polymerase epsilon complex (By similarity). Participates in chromosomal DNA replication. Required during synthesis of the leading DNA strands at the replication fork and binds at/or near replication origins and moves along DNA with the replication fork. Has 3'-5' proofreading exonuclease activity that corrects errors arising during DNA replication (By similarity). It is also involved in DNA synthesis during DNA repair (By similarity).</text>
</comment>
<comment type="catalytic activity">
    <reaction evidence="2">
        <text>DNA(n) + a 2'-deoxyribonucleoside 5'-triphosphate = DNA(n+1) + diphosphate</text>
        <dbReference type="Rhea" id="RHEA:22508"/>
        <dbReference type="Rhea" id="RHEA-COMP:17339"/>
        <dbReference type="Rhea" id="RHEA-COMP:17340"/>
        <dbReference type="ChEBI" id="CHEBI:33019"/>
        <dbReference type="ChEBI" id="CHEBI:61560"/>
        <dbReference type="ChEBI" id="CHEBI:173112"/>
        <dbReference type="EC" id="2.7.7.7"/>
    </reaction>
</comment>
<comment type="cofactor">
    <cofactor evidence="2">
        <name>[4Fe-4S] cluster</name>
        <dbReference type="ChEBI" id="CHEBI:49883"/>
    </cofactor>
    <text evidence="2">Binds 1 [4Fe-4S] cluster.</text>
</comment>
<comment type="subunit">
    <text evidence="3">Component of the DNA polymerase epsilon complex consisting of four subunits: the catalytic subunit POLE and the accessory subunits POLE2, POLE3 and POLE4. Interacts with RAD17 and TOPBP1.</text>
</comment>
<comment type="subcellular location">
    <subcellularLocation>
        <location>Nucleus</location>
    </subcellularLocation>
</comment>
<comment type="domain">
    <text evidence="2">The DNA polymerase activity domain resides in the N-terminal half of the protein, while the C-terminus is necessary for maintenance of the complex.</text>
</comment>
<comment type="domain">
    <text evidence="1">The CysA-type zinc finger is required for PCNA-binding.</text>
</comment>
<comment type="domain">
    <text evidence="1">The CysB motif binds 1 4Fe-4S cluster and is required for the formation of polymerase complexes.</text>
</comment>
<comment type="similarity">
    <text evidence="5">Belongs to the DNA polymerase type-B family.</text>
</comment>
<keyword id="KW-0004">4Fe-4S</keyword>
<keyword id="KW-0227">DNA damage</keyword>
<keyword id="KW-0234">DNA repair</keyword>
<keyword id="KW-0235">DNA replication</keyword>
<keyword id="KW-0238">DNA-binding</keyword>
<keyword id="KW-0239">DNA-directed DNA polymerase</keyword>
<keyword id="KW-0378">Hydrolase</keyword>
<keyword id="KW-0408">Iron</keyword>
<keyword id="KW-0411">Iron-sulfur</keyword>
<keyword id="KW-0479">Metal-binding</keyword>
<keyword id="KW-0548">Nucleotidyltransferase</keyword>
<keyword id="KW-0539">Nucleus</keyword>
<keyword id="KW-0597">Phosphoprotein</keyword>
<keyword id="KW-1185">Reference proteome</keyword>
<keyword id="KW-0808">Transferase</keyword>
<keyword id="KW-0862">Zinc</keyword>
<keyword id="KW-0863">Zinc-finger</keyword>
<protein>
    <recommendedName>
        <fullName>DNA polymerase epsilon catalytic subunit A</fullName>
        <ecNumber evidence="2">2.7.7.7</ecNumber>
    </recommendedName>
    <alternativeName>
        <fullName evidence="5">3'-5' exodeoxyribonuclease</fullName>
        <ecNumber evidence="2">3.1.11.-</ecNumber>
    </alternativeName>
    <alternativeName>
        <fullName>DNA polymerase II subunit A</fullName>
    </alternativeName>
</protein>